<organism>
    <name type="scientific">Coxiella burnetii (strain RSA 493 / Nine Mile phase I)</name>
    <dbReference type="NCBI Taxonomy" id="227377"/>
    <lineage>
        <taxon>Bacteria</taxon>
        <taxon>Pseudomonadati</taxon>
        <taxon>Pseudomonadota</taxon>
        <taxon>Gammaproteobacteria</taxon>
        <taxon>Legionellales</taxon>
        <taxon>Coxiellaceae</taxon>
        <taxon>Coxiella</taxon>
    </lineage>
</organism>
<dbReference type="EMBL" id="AE016828">
    <property type="protein sequence ID" value="AAO90385.1"/>
    <property type="molecule type" value="Genomic_DNA"/>
</dbReference>
<dbReference type="RefSeq" id="NP_819871.1">
    <property type="nucleotide sequence ID" value="NC_002971.4"/>
</dbReference>
<dbReference type="RefSeq" id="WP_005768842.1">
    <property type="nucleotide sequence ID" value="NC_002971.4"/>
</dbReference>
<dbReference type="SMR" id="Q83D88"/>
<dbReference type="STRING" id="227377.CBU_0851"/>
<dbReference type="DNASU" id="1208744"/>
<dbReference type="EnsemblBacteria" id="AAO90385">
    <property type="protein sequence ID" value="AAO90385"/>
    <property type="gene ID" value="CBU_0851"/>
</dbReference>
<dbReference type="GeneID" id="1208744"/>
<dbReference type="KEGG" id="cbu:CBU_0851"/>
<dbReference type="PATRIC" id="fig|227377.7.peg.836"/>
<dbReference type="eggNOG" id="COG0184">
    <property type="taxonomic scope" value="Bacteria"/>
</dbReference>
<dbReference type="HOGENOM" id="CLU_148518_0_0_6"/>
<dbReference type="OrthoDB" id="9799262at2"/>
<dbReference type="Proteomes" id="UP000002671">
    <property type="component" value="Chromosome"/>
</dbReference>
<dbReference type="GO" id="GO:0022627">
    <property type="term" value="C:cytosolic small ribosomal subunit"/>
    <property type="evidence" value="ECO:0000318"/>
    <property type="project" value="GO_Central"/>
</dbReference>
<dbReference type="GO" id="GO:0019843">
    <property type="term" value="F:rRNA binding"/>
    <property type="evidence" value="ECO:0007669"/>
    <property type="project" value="UniProtKB-UniRule"/>
</dbReference>
<dbReference type="GO" id="GO:0003735">
    <property type="term" value="F:structural constituent of ribosome"/>
    <property type="evidence" value="ECO:0007669"/>
    <property type="project" value="InterPro"/>
</dbReference>
<dbReference type="GO" id="GO:0006412">
    <property type="term" value="P:translation"/>
    <property type="evidence" value="ECO:0007669"/>
    <property type="project" value="UniProtKB-UniRule"/>
</dbReference>
<dbReference type="CDD" id="cd00353">
    <property type="entry name" value="Ribosomal_S15p_S13e"/>
    <property type="match status" value="1"/>
</dbReference>
<dbReference type="FunFam" id="1.10.287.10:FF:000002">
    <property type="entry name" value="30S ribosomal protein S15"/>
    <property type="match status" value="1"/>
</dbReference>
<dbReference type="Gene3D" id="6.10.250.3130">
    <property type="match status" value="1"/>
</dbReference>
<dbReference type="Gene3D" id="1.10.287.10">
    <property type="entry name" value="S15/NS1, RNA-binding"/>
    <property type="match status" value="1"/>
</dbReference>
<dbReference type="HAMAP" id="MF_01343_B">
    <property type="entry name" value="Ribosomal_uS15_B"/>
    <property type="match status" value="1"/>
</dbReference>
<dbReference type="InterPro" id="IPR000589">
    <property type="entry name" value="Ribosomal_uS15"/>
</dbReference>
<dbReference type="InterPro" id="IPR005290">
    <property type="entry name" value="Ribosomal_uS15_bac-type"/>
</dbReference>
<dbReference type="InterPro" id="IPR009068">
    <property type="entry name" value="uS15_NS1_RNA-bd_sf"/>
</dbReference>
<dbReference type="NCBIfam" id="TIGR00952">
    <property type="entry name" value="S15_bact"/>
    <property type="match status" value="1"/>
</dbReference>
<dbReference type="PANTHER" id="PTHR23321">
    <property type="entry name" value="RIBOSOMAL PROTEIN S15, BACTERIAL AND ORGANELLAR"/>
    <property type="match status" value="1"/>
</dbReference>
<dbReference type="PANTHER" id="PTHR23321:SF26">
    <property type="entry name" value="SMALL RIBOSOMAL SUBUNIT PROTEIN US15M"/>
    <property type="match status" value="1"/>
</dbReference>
<dbReference type="Pfam" id="PF00312">
    <property type="entry name" value="Ribosomal_S15"/>
    <property type="match status" value="1"/>
</dbReference>
<dbReference type="SMART" id="SM01387">
    <property type="entry name" value="Ribosomal_S15"/>
    <property type="match status" value="1"/>
</dbReference>
<dbReference type="SUPFAM" id="SSF47060">
    <property type="entry name" value="S15/NS1 RNA-binding domain"/>
    <property type="match status" value="1"/>
</dbReference>
<dbReference type="PROSITE" id="PS00362">
    <property type="entry name" value="RIBOSOMAL_S15"/>
    <property type="match status" value="1"/>
</dbReference>
<evidence type="ECO:0000255" key="1">
    <source>
        <dbReference type="HAMAP-Rule" id="MF_01343"/>
    </source>
</evidence>
<evidence type="ECO:0000305" key="2"/>
<protein>
    <recommendedName>
        <fullName evidence="1">Small ribosomal subunit protein uS15</fullName>
    </recommendedName>
    <alternativeName>
        <fullName evidence="2">30S ribosomal protein S15</fullName>
    </alternativeName>
</protein>
<keyword id="KW-1185">Reference proteome</keyword>
<keyword id="KW-0687">Ribonucleoprotein</keyword>
<keyword id="KW-0689">Ribosomal protein</keyword>
<keyword id="KW-0694">RNA-binding</keyword>
<keyword id="KW-0699">rRNA-binding</keyword>
<comment type="function">
    <text evidence="1">One of the primary rRNA binding proteins, it binds directly to 16S rRNA where it helps nucleate assembly of the platform of the 30S subunit by binding and bridging several RNA helices of the 16S rRNA.</text>
</comment>
<comment type="function">
    <text evidence="1">Forms an intersubunit bridge (bridge B4) with the 23S rRNA of the 50S subunit in the ribosome.</text>
</comment>
<comment type="subunit">
    <text evidence="1">Part of the 30S ribosomal subunit. Forms a bridge to the 50S subunit in the 70S ribosome, contacting the 23S rRNA.</text>
</comment>
<comment type="similarity">
    <text evidence="1">Belongs to the universal ribosomal protein uS15 family.</text>
</comment>
<sequence length="89" mass="10316">MSLASAETAKIVKEYQLGKDDTGSPEVQVAILTAKIIKLTDHMKAHKHDHHSRRGLLRMVSQRRKLLNFLKRNDLQRYLKLIERLGLRS</sequence>
<reference key="1">
    <citation type="journal article" date="2003" name="Proc. Natl. Acad. Sci. U.S.A.">
        <title>Complete genome sequence of the Q-fever pathogen, Coxiella burnetii.</title>
        <authorList>
            <person name="Seshadri R."/>
            <person name="Paulsen I.T."/>
            <person name="Eisen J.A."/>
            <person name="Read T.D."/>
            <person name="Nelson K.E."/>
            <person name="Nelson W.C."/>
            <person name="Ward N.L."/>
            <person name="Tettelin H."/>
            <person name="Davidsen T.M."/>
            <person name="Beanan M.J."/>
            <person name="DeBoy R.T."/>
            <person name="Daugherty S.C."/>
            <person name="Brinkac L.M."/>
            <person name="Madupu R."/>
            <person name="Dodson R.J."/>
            <person name="Khouri H.M."/>
            <person name="Lee K.H."/>
            <person name="Carty H.A."/>
            <person name="Scanlan D."/>
            <person name="Heinzen R.A."/>
            <person name="Thompson H.A."/>
            <person name="Samuel J.E."/>
            <person name="Fraser C.M."/>
            <person name="Heidelberg J.F."/>
        </authorList>
    </citation>
    <scope>NUCLEOTIDE SEQUENCE [LARGE SCALE GENOMIC DNA]</scope>
    <source>
        <strain>RSA 493 / Nine Mile phase I</strain>
    </source>
</reference>
<proteinExistence type="inferred from homology"/>
<accession>Q83D88</accession>
<feature type="chain" id="PRO_0000115425" description="Small ribosomal subunit protein uS15">
    <location>
        <begin position="1"/>
        <end position="89"/>
    </location>
</feature>
<name>RS15_COXBU</name>
<gene>
    <name evidence="1" type="primary">rpsO</name>
    <name type="ordered locus">CBU_0851</name>
</gene>